<evidence type="ECO:0000255" key="1">
    <source>
        <dbReference type="HAMAP-Rule" id="MF_00321"/>
    </source>
</evidence>
<dbReference type="EMBL" id="CP001391">
    <property type="protein sequence ID" value="ACN95063.1"/>
    <property type="molecule type" value="Genomic_DNA"/>
</dbReference>
<dbReference type="SMR" id="C0R5M1"/>
<dbReference type="STRING" id="66084.WRi_002330"/>
<dbReference type="KEGG" id="wri:WRi_002330"/>
<dbReference type="HOGENOM" id="CLU_033732_2_0_5"/>
<dbReference type="Proteomes" id="UP000001293">
    <property type="component" value="Chromosome"/>
</dbReference>
<dbReference type="GO" id="GO:0005525">
    <property type="term" value="F:GTP binding"/>
    <property type="evidence" value="ECO:0007669"/>
    <property type="project" value="UniProtKB-UniRule"/>
</dbReference>
<dbReference type="GO" id="GO:0046872">
    <property type="term" value="F:metal ion binding"/>
    <property type="evidence" value="ECO:0007669"/>
    <property type="project" value="UniProtKB-KW"/>
</dbReference>
<dbReference type="GO" id="GO:0000917">
    <property type="term" value="P:division septum assembly"/>
    <property type="evidence" value="ECO:0007669"/>
    <property type="project" value="UniProtKB-KW"/>
</dbReference>
<dbReference type="CDD" id="cd01876">
    <property type="entry name" value="YihA_EngB"/>
    <property type="match status" value="1"/>
</dbReference>
<dbReference type="Gene3D" id="3.40.50.300">
    <property type="entry name" value="P-loop containing nucleotide triphosphate hydrolases"/>
    <property type="match status" value="1"/>
</dbReference>
<dbReference type="HAMAP" id="MF_00321">
    <property type="entry name" value="GTPase_EngB"/>
    <property type="match status" value="1"/>
</dbReference>
<dbReference type="InterPro" id="IPR030393">
    <property type="entry name" value="G_ENGB_dom"/>
</dbReference>
<dbReference type="InterPro" id="IPR006073">
    <property type="entry name" value="GTP-bd"/>
</dbReference>
<dbReference type="InterPro" id="IPR019987">
    <property type="entry name" value="GTP-bd_ribosome_bio_YsxC"/>
</dbReference>
<dbReference type="InterPro" id="IPR027417">
    <property type="entry name" value="P-loop_NTPase"/>
</dbReference>
<dbReference type="NCBIfam" id="TIGR03598">
    <property type="entry name" value="GTPase_YsxC"/>
    <property type="match status" value="1"/>
</dbReference>
<dbReference type="PANTHER" id="PTHR11649:SF13">
    <property type="entry name" value="ENGB-TYPE G DOMAIN-CONTAINING PROTEIN"/>
    <property type="match status" value="1"/>
</dbReference>
<dbReference type="PANTHER" id="PTHR11649">
    <property type="entry name" value="MSS1/TRME-RELATED GTP-BINDING PROTEIN"/>
    <property type="match status" value="1"/>
</dbReference>
<dbReference type="Pfam" id="PF01926">
    <property type="entry name" value="MMR_HSR1"/>
    <property type="match status" value="1"/>
</dbReference>
<dbReference type="SUPFAM" id="SSF52540">
    <property type="entry name" value="P-loop containing nucleoside triphosphate hydrolases"/>
    <property type="match status" value="1"/>
</dbReference>
<dbReference type="PROSITE" id="PS51706">
    <property type="entry name" value="G_ENGB"/>
    <property type="match status" value="1"/>
</dbReference>
<comment type="function">
    <text evidence="1">Necessary for normal cell division and for the maintenance of normal septation.</text>
</comment>
<comment type="cofactor">
    <cofactor evidence="1">
        <name>Mg(2+)</name>
        <dbReference type="ChEBI" id="CHEBI:18420"/>
    </cofactor>
</comment>
<comment type="similarity">
    <text evidence="1">Belongs to the TRAFAC class TrmE-Era-EngA-EngB-Septin-like GTPase superfamily. EngB GTPase family.</text>
</comment>
<gene>
    <name evidence="1" type="primary">engB</name>
    <name type="ordered locus">WRi_002330</name>
</gene>
<name>ENGB_WOLWR</name>
<accession>C0R5M1</accession>
<proteinExistence type="inferred from homology"/>
<reference key="1">
    <citation type="journal article" date="2009" name="Proc. Natl. Acad. Sci. U.S.A.">
        <title>The mosaic genome structure of the Wolbachia wRi strain infecting Drosophila simulans.</title>
        <authorList>
            <person name="Klasson L."/>
            <person name="Westberg J."/>
            <person name="Sapountzis P."/>
            <person name="Naeslund K."/>
            <person name="Lutnaes Y."/>
            <person name="Darby A.C."/>
            <person name="Veneti Z."/>
            <person name="Chen L."/>
            <person name="Braig H.R."/>
            <person name="Garrett R."/>
            <person name="Bourtzis K."/>
            <person name="Andersson S.G."/>
        </authorList>
    </citation>
    <scope>NUCLEOTIDE SEQUENCE [LARGE SCALE GENOMIC DNA]</scope>
    <source>
        <strain>wRi</strain>
    </source>
</reference>
<protein>
    <recommendedName>
        <fullName evidence="1">Probable GTP-binding protein EngB</fullName>
    </recommendedName>
</protein>
<feature type="chain" id="PRO_1000189945" description="Probable GTP-binding protein EngB">
    <location>
        <begin position="1"/>
        <end position="197"/>
    </location>
</feature>
<feature type="domain" description="EngB-type G" evidence="1">
    <location>
        <begin position="25"/>
        <end position="197"/>
    </location>
</feature>
<feature type="binding site" evidence="1">
    <location>
        <begin position="33"/>
        <end position="40"/>
    </location>
    <ligand>
        <name>GTP</name>
        <dbReference type="ChEBI" id="CHEBI:37565"/>
    </ligand>
</feature>
<feature type="binding site" evidence="1">
    <location>
        <position position="40"/>
    </location>
    <ligand>
        <name>Mg(2+)</name>
        <dbReference type="ChEBI" id="CHEBI:18420"/>
    </ligand>
</feature>
<feature type="binding site" evidence="1">
    <location>
        <begin position="60"/>
        <end position="64"/>
    </location>
    <ligand>
        <name>GTP</name>
        <dbReference type="ChEBI" id="CHEBI:37565"/>
    </ligand>
</feature>
<feature type="binding site" evidence="1">
    <location>
        <position position="62"/>
    </location>
    <ligand>
        <name>Mg(2+)</name>
        <dbReference type="ChEBI" id="CHEBI:18420"/>
    </ligand>
</feature>
<feature type="binding site" evidence="1">
    <location>
        <begin position="79"/>
        <end position="82"/>
    </location>
    <ligand>
        <name>GTP</name>
        <dbReference type="ChEBI" id="CHEBI:37565"/>
    </ligand>
</feature>
<feature type="binding site" evidence="1">
    <location>
        <begin position="146"/>
        <end position="149"/>
    </location>
    <ligand>
        <name>GTP</name>
        <dbReference type="ChEBI" id="CHEBI:37565"/>
    </ligand>
</feature>
<feature type="binding site" evidence="1">
    <location>
        <begin position="177"/>
        <end position="179"/>
    </location>
    <ligand>
        <name>GTP</name>
        <dbReference type="ChEBI" id="CHEBI:37565"/>
    </ligand>
</feature>
<sequence>MAKQITSNCNFIFGASDIKSLPNESAPEIAFAGRSNVGKSSLINLLINSKKAARVSSKPGCTRQINFYSMYNDKFRLVDLPGYGYSHAGKEEIIQYLNLIEYYLIQRRNLRRVFVLIDSKVGLKEIDKDFIYWLICNNINFNVVLTKIDKVSQKSLGAVIEDIQRWINNENVSIHQMSIRVKHKITKVRDEFFKFTR</sequence>
<organism>
    <name type="scientific">Wolbachia sp. subsp. Drosophila simulans (strain wRi)</name>
    <dbReference type="NCBI Taxonomy" id="66084"/>
    <lineage>
        <taxon>Bacteria</taxon>
        <taxon>Pseudomonadati</taxon>
        <taxon>Pseudomonadota</taxon>
        <taxon>Alphaproteobacteria</taxon>
        <taxon>Rickettsiales</taxon>
        <taxon>Anaplasmataceae</taxon>
        <taxon>Wolbachieae</taxon>
        <taxon>Wolbachia</taxon>
    </lineage>
</organism>
<keyword id="KW-0131">Cell cycle</keyword>
<keyword id="KW-0132">Cell division</keyword>
<keyword id="KW-0342">GTP-binding</keyword>
<keyword id="KW-0460">Magnesium</keyword>
<keyword id="KW-0479">Metal-binding</keyword>
<keyword id="KW-0547">Nucleotide-binding</keyword>
<keyword id="KW-0717">Septation</keyword>